<protein>
    <recommendedName>
        <fullName evidence="1">NAD(P)H-quinone oxidoreductase subunit K, chloroplastic</fullName>
        <ecNumber evidence="1">7.1.1.-</ecNumber>
    </recommendedName>
    <alternativeName>
        <fullName evidence="1">NAD(P)H dehydrogenase subunit K</fullName>
    </alternativeName>
    <alternativeName>
        <fullName evidence="1">NADH-plastoquinone oxidoreductase subunit K</fullName>
    </alternativeName>
</protein>
<proteinExistence type="inferred from homology"/>
<gene>
    <name evidence="1" type="primary">ndhK</name>
</gene>
<feature type="chain" id="PRO_0000358539" description="NAD(P)H-quinone oxidoreductase subunit K, chloroplastic">
    <location>
        <begin position="1"/>
        <end position="225"/>
    </location>
</feature>
<feature type="binding site" evidence="1">
    <location>
        <position position="43"/>
    </location>
    <ligand>
        <name>[4Fe-4S] cluster</name>
        <dbReference type="ChEBI" id="CHEBI:49883"/>
    </ligand>
</feature>
<feature type="binding site" evidence="1">
    <location>
        <position position="44"/>
    </location>
    <ligand>
        <name>[4Fe-4S] cluster</name>
        <dbReference type="ChEBI" id="CHEBI:49883"/>
    </ligand>
</feature>
<feature type="binding site" evidence="1">
    <location>
        <position position="108"/>
    </location>
    <ligand>
        <name>[4Fe-4S] cluster</name>
        <dbReference type="ChEBI" id="CHEBI:49883"/>
    </ligand>
</feature>
<feature type="binding site" evidence="1">
    <location>
        <position position="139"/>
    </location>
    <ligand>
        <name>[4Fe-4S] cluster</name>
        <dbReference type="ChEBI" id="CHEBI:49883"/>
    </ligand>
</feature>
<evidence type="ECO:0000255" key="1">
    <source>
        <dbReference type="HAMAP-Rule" id="MF_01356"/>
    </source>
</evidence>
<evidence type="ECO:0000305" key="2"/>
<name>NDHK_DAUCA</name>
<organism>
    <name type="scientific">Daucus carota</name>
    <name type="common">Wild carrot</name>
    <dbReference type="NCBI Taxonomy" id="4039"/>
    <lineage>
        <taxon>Eukaryota</taxon>
        <taxon>Viridiplantae</taxon>
        <taxon>Streptophyta</taxon>
        <taxon>Embryophyta</taxon>
        <taxon>Tracheophyta</taxon>
        <taxon>Spermatophyta</taxon>
        <taxon>Magnoliopsida</taxon>
        <taxon>eudicotyledons</taxon>
        <taxon>Gunneridae</taxon>
        <taxon>Pentapetalae</taxon>
        <taxon>asterids</taxon>
        <taxon>campanulids</taxon>
        <taxon>Apiales</taxon>
        <taxon>Apiaceae</taxon>
        <taxon>Apioideae</taxon>
        <taxon>Scandiceae</taxon>
        <taxon>Daucinae</taxon>
        <taxon>Daucus</taxon>
        <taxon>Daucus sect. Daucus</taxon>
    </lineage>
</organism>
<accession>Q0G9V8</accession>
<dbReference type="EC" id="7.1.1.-" evidence="1"/>
<dbReference type="EMBL" id="DQ898156">
    <property type="protein sequence ID" value="ABI32428.1"/>
    <property type="status" value="ALT_INIT"/>
    <property type="molecule type" value="Genomic_DNA"/>
</dbReference>
<dbReference type="RefSeq" id="YP_740121.2">
    <property type="nucleotide sequence ID" value="NC_008325.1"/>
</dbReference>
<dbReference type="SMR" id="Q0G9V8"/>
<dbReference type="GeneID" id="4266744"/>
<dbReference type="OMA" id="TMKMAPQ"/>
<dbReference type="GO" id="GO:0009535">
    <property type="term" value="C:chloroplast thylakoid membrane"/>
    <property type="evidence" value="ECO:0007669"/>
    <property type="project" value="UniProtKB-SubCell"/>
</dbReference>
<dbReference type="GO" id="GO:0045271">
    <property type="term" value="C:respiratory chain complex I"/>
    <property type="evidence" value="ECO:0007669"/>
    <property type="project" value="TreeGrafter"/>
</dbReference>
<dbReference type="GO" id="GO:0051539">
    <property type="term" value="F:4 iron, 4 sulfur cluster binding"/>
    <property type="evidence" value="ECO:0007669"/>
    <property type="project" value="UniProtKB-KW"/>
</dbReference>
<dbReference type="GO" id="GO:0005506">
    <property type="term" value="F:iron ion binding"/>
    <property type="evidence" value="ECO:0007669"/>
    <property type="project" value="UniProtKB-UniRule"/>
</dbReference>
<dbReference type="GO" id="GO:0008137">
    <property type="term" value="F:NADH dehydrogenase (ubiquinone) activity"/>
    <property type="evidence" value="ECO:0007669"/>
    <property type="project" value="InterPro"/>
</dbReference>
<dbReference type="GO" id="GO:0048038">
    <property type="term" value="F:quinone binding"/>
    <property type="evidence" value="ECO:0007669"/>
    <property type="project" value="UniProtKB-KW"/>
</dbReference>
<dbReference type="GO" id="GO:0009060">
    <property type="term" value="P:aerobic respiration"/>
    <property type="evidence" value="ECO:0007669"/>
    <property type="project" value="TreeGrafter"/>
</dbReference>
<dbReference type="GO" id="GO:0015990">
    <property type="term" value="P:electron transport coupled proton transport"/>
    <property type="evidence" value="ECO:0007669"/>
    <property type="project" value="TreeGrafter"/>
</dbReference>
<dbReference type="GO" id="GO:0019684">
    <property type="term" value="P:photosynthesis, light reaction"/>
    <property type="evidence" value="ECO:0007669"/>
    <property type="project" value="UniProtKB-UniRule"/>
</dbReference>
<dbReference type="FunFam" id="3.40.50.12280:FF:000003">
    <property type="entry name" value="NAD(P)H-quinone oxidoreductase subunit K, chloroplastic"/>
    <property type="match status" value="1"/>
</dbReference>
<dbReference type="Gene3D" id="3.40.50.12280">
    <property type="match status" value="1"/>
</dbReference>
<dbReference type="HAMAP" id="MF_01356">
    <property type="entry name" value="NDH1_NuoB"/>
    <property type="match status" value="1"/>
</dbReference>
<dbReference type="InterPro" id="IPR006137">
    <property type="entry name" value="NADH_UbQ_OxRdtase-like_20kDa"/>
</dbReference>
<dbReference type="InterPro" id="IPR006138">
    <property type="entry name" value="NADH_UQ_OxRdtase_20Kd_su"/>
</dbReference>
<dbReference type="NCBIfam" id="TIGR01957">
    <property type="entry name" value="nuoB_fam"/>
    <property type="match status" value="1"/>
</dbReference>
<dbReference type="NCBIfam" id="NF005012">
    <property type="entry name" value="PRK06411.1"/>
    <property type="match status" value="1"/>
</dbReference>
<dbReference type="PANTHER" id="PTHR11995">
    <property type="entry name" value="NADH DEHYDROGENASE"/>
    <property type="match status" value="1"/>
</dbReference>
<dbReference type="PANTHER" id="PTHR11995:SF14">
    <property type="entry name" value="NADH DEHYDROGENASE [UBIQUINONE] IRON-SULFUR PROTEIN 7, MITOCHONDRIAL"/>
    <property type="match status" value="1"/>
</dbReference>
<dbReference type="Pfam" id="PF01058">
    <property type="entry name" value="Oxidored_q6"/>
    <property type="match status" value="1"/>
</dbReference>
<dbReference type="SUPFAM" id="SSF56770">
    <property type="entry name" value="HydA/Nqo6-like"/>
    <property type="match status" value="1"/>
</dbReference>
<dbReference type="PROSITE" id="PS01150">
    <property type="entry name" value="COMPLEX1_20K"/>
    <property type="match status" value="1"/>
</dbReference>
<reference key="1">
    <citation type="journal article" date="2006" name="BMC Genomics">
        <title>Complete plastid genome sequence of Daucus carota: implications for biotechnology and phylogeny of angiosperms.</title>
        <authorList>
            <person name="Ruhlman T."/>
            <person name="Lee S.-B."/>
            <person name="Jansen R.K."/>
            <person name="Hostetler J.B."/>
            <person name="Tallon L.J."/>
            <person name="Town C.D."/>
            <person name="Daniell H."/>
        </authorList>
    </citation>
    <scope>NUCLEOTIDE SEQUENCE [LARGE SCALE GENOMIC DNA]</scope>
    <source>
        <strain>cv. Danvers Half-long</strain>
    </source>
</reference>
<comment type="function">
    <text evidence="1">NDH shuttles electrons from NAD(P)H:plastoquinone, via FMN and iron-sulfur (Fe-S) centers, to quinones in the photosynthetic chain and possibly in a chloroplast respiratory chain. The immediate electron acceptor for the enzyme in this species is believed to be plastoquinone. Couples the redox reaction to proton translocation, and thus conserves the redox energy in a proton gradient.</text>
</comment>
<comment type="catalytic activity">
    <reaction evidence="1">
        <text>a plastoquinone + NADH + (n+1) H(+)(in) = a plastoquinol + NAD(+) + n H(+)(out)</text>
        <dbReference type="Rhea" id="RHEA:42608"/>
        <dbReference type="Rhea" id="RHEA-COMP:9561"/>
        <dbReference type="Rhea" id="RHEA-COMP:9562"/>
        <dbReference type="ChEBI" id="CHEBI:15378"/>
        <dbReference type="ChEBI" id="CHEBI:17757"/>
        <dbReference type="ChEBI" id="CHEBI:57540"/>
        <dbReference type="ChEBI" id="CHEBI:57945"/>
        <dbReference type="ChEBI" id="CHEBI:62192"/>
    </reaction>
</comment>
<comment type="catalytic activity">
    <reaction evidence="1">
        <text>a plastoquinone + NADPH + (n+1) H(+)(in) = a plastoquinol + NADP(+) + n H(+)(out)</text>
        <dbReference type="Rhea" id="RHEA:42612"/>
        <dbReference type="Rhea" id="RHEA-COMP:9561"/>
        <dbReference type="Rhea" id="RHEA-COMP:9562"/>
        <dbReference type="ChEBI" id="CHEBI:15378"/>
        <dbReference type="ChEBI" id="CHEBI:17757"/>
        <dbReference type="ChEBI" id="CHEBI:57783"/>
        <dbReference type="ChEBI" id="CHEBI:58349"/>
        <dbReference type="ChEBI" id="CHEBI:62192"/>
    </reaction>
</comment>
<comment type="cofactor">
    <cofactor evidence="1">
        <name>[4Fe-4S] cluster</name>
        <dbReference type="ChEBI" id="CHEBI:49883"/>
    </cofactor>
    <text evidence="1">Binds 1 [4Fe-4S] cluster.</text>
</comment>
<comment type="subunit">
    <text evidence="1">NDH is composed of at least 16 different subunits, 5 of which are encoded in the nucleus.</text>
</comment>
<comment type="subcellular location">
    <subcellularLocation>
        <location evidence="1">Plastid</location>
        <location evidence="1">Chloroplast thylakoid membrane</location>
        <topology evidence="1">Peripheral membrane protein</topology>
        <orientation evidence="1">Stromal side</orientation>
    </subcellularLocation>
</comment>
<comment type="similarity">
    <text evidence="1">Belongs to the complex I 20 kDa subunit family.</text>
</comment>
<comment type="sequence caution" evidence="2">
    <conflict type="erroneous initiation">
        <sequence resource="EMBL-CDS" id="ABI32428"/>
    </conflict>
</comment>
<sequence>MNSIEFPLLDRTTQNSVISTTSNDLSNWSRLSSLWPLLYGTSCCFIEFASLIGSRFDFDRYGLVPRSSPRQADLILTAGTVTMKMAPSLVRLYEQMPEPKYVIAMGACTISGGMFSTDSYSTVRGVDKLIPVDVYLPGCPPKPEAVIDAITKLRKKISREIYEDRIKSQRENRCFTTNHKLKVGRSIHTGNYDREFLYQPTSTSEIPPETFFKYKSSVSSHELVN</sequence>
<keyword id="KW-0004">4Fe-4S</keyword>
<keyword id="KW-0150">Chloroplast</keyword>
<keyword id="KW-0408">Iron</keyword>
<keyword id="KW-0411">Iron-sulfur</keyword>
<keyword id="KW-0472">Membrane</keyword>
<keyword id="KW-0479">Metal-binding</keyword>
<keyword id="KW-0520">NAD</keyword>
<keyword id="KW-0521">NADP</keyword>
<keyword id="KW-0934">Plastid</keyword>
<keyword id="KW-0618">Plastoquinone</keyword>
<keyword id="KW-0874">Quinone</keyword>
<keyword id="KW-0793">Thylakoid</keyword>
<keyword id="KW-1278">Translocase</keyword>
<keyword id="KW-0813">Transport</keyword>
<geneLocation type="chloroplast"/>